<sequence>MTLQENELIKIRRDLHQIPEIGLEEYETSDYLLKIINGLPQENLEIKRWKTAILVHLNGENKNYTIGYRTDIDGLPVEEKTGLPFSSKHEGRMHACGHDIHMTVALGVLSYFASHRPKYNMTFIFQPAEENASGGMKLYQSGELDEWMPDEIYALHDNPQLPAGTIGCRKGTLFAGTCEIHVKFIGKSGHAAYPHQANDMVVAGAQFVNQIQTIVSRNVDPIQSVVVTLGHFSAGTTGNVISGVCQIDGTIRALTQENNLLIQKRVRTIAEGIAHSFDCELEIDLHQGGYYPVENDDNTTEAFINYMKNEDDVDFVETLPAMTGEDFGYLISKIPGTMFWLGVDSPYSLHSEYLAPKEESIMLGVNAITGYLKNRQESLNK</sequence>
<feature type="chain" id="PRO_0000376765" description="N-acetyldiaminopimelate deacetylase">
    <location>
        <begin position="1"/>
        <end position="381"/>
    </location>
</feature>
<feature type="active site" evidence="1">
    <location>
        <position position="71"/>
    </location>
</feature>
<feature type="active site" description="Proton acceptor" evidence="1">
    <location>
        <position position="130"/>
    </location>
</feature>
<comment type="function">
    <text evidence="1">Catalyzes the conversion of N-acetyl-diaminopimelate to diaminopimelate and acetate.</text>
</comment>
<comment type="catalytic activity">
    <reaction evidence="1">
        <text>N-acetyl-(2S,6S)-2,6-diaminopimelate + H2O = (2S,6S)-2,6-diaminopimelate + acetate</text>
        <dbReference type="Rhea" id="RHEA:20405"/>
        <dbReference type="ChEBI" id="CHEBI:15377"/>
        <dbReference type="ChEBI" id="CHEBI:30089"/>
        <dbReference type="ChEBI" id="CHEBI:57609"/>
        <dbReference type="ChEBI" id="CHEBI:58767"/>
        <dbReference type="EC" id="3.5.1.47"/>
    </reaction>
</comment>
<comment type="pathway">
    <text evidence="1">Amino-acid biosynthesis; L-lysine biosynthesis via DAP pathway; LL-2,6-diaminopimelate from (S)-tetrahydrodipicolinate (acetylase route): step 3/3.</text>
</comment>
<comment type="similarity">
    <text evidence="1">Belongs to the peptidase M20A family. N-acetyldiaminopimelate deacetylase subfamily.</text>
</comment>
<reference key="1">
    <citation type="journal article" date="2006" name="Proc. Natl. Acad. Sci. U.S.A.">
        <title>Multireplicon genome architecture of Lactobacillus salivarius.</title>
        <authorList>
            <person name="Claesson M.J."/>
            <person name="Li Y."/>
            <person name="Leahy S."/>
            <person name="Canchaya C."/>
            <person name="van Pijkeren J.P."/>
            <person name="Cerdeno-Tarraga A.M."/>
            <person name="Parkhill J."/>
            <person name="Flynn S."/>
            <person name="O'Sullivan G.C."/>
            <person name="Collins J.K."/>
            <person name="Higgins D."/>
            <person name="Shanahan F."/>
            <person name="Fitzgerald G.F."/>
            <person name="van Sinderen D."/>
            <person name="O'Toole P.W."/>
        </authorList>
    </citation>
    <scope>NUCLEOTIDE SEQUENCE [LARGE SCALE GENOMIC DNA]</scope>
    <source>
        <strain>UCC118</strain>
    </source>
</reference>
<gene>
    <name type="ordered locus">LSL_0469</name>
</gene>
<protein>
    <recommendedName>
        <fullName evidence="1">N-acetyldiaminopimelate deacetylase</fullName>
        <ecNumber evidence="1">3.5.1.47</ecNumber>
    </recommendedName>
</protein>
<accession>Q1WUQ7</accession>
<name>DAPEL_LIGS1</name>
<organism>
    <name type="scientific">Ligilactobacillus salivarius (strain UCC118)</name>
    <name type="common">Lactobacillus salivarius</name>
    <dbReference type="NCBI Taxonomy" id="362948"/>
    <lineage>
        <taxon>Bacteria</taxon>
        <taxon>Bacillati</taxon>
        <taxon>Bacillota</taxon>
        <taxon>Bacilli</taxon>
        <taxon>Lactobacillales</taxon>
        <taxon>Lactobacillaceae</taxon>
        <taxon>Ligilactobacillus</taxon>
    </lineage>
</organism>
<dbReference type="EC" id="3.5.1.47" evidence="1"/>
<dbReference type="EMBL" id="CP000233">
    <property type="protein sequence ID" value="ABD99278.1"/>
    <property type="molecule type" value="Genomic_DNA"/>
</dbReference>
<dbReference type="RefSeq" id="WP_011475772.1">
    <property type="nucleotide sequence ID" value="NC_007929.1"/>
</dbReference>
<dbReference type="RefSeq" id="YP_535361.1">
    <property type="nucleotide sequence ID" value="NC_007929.1"/>
</dbReference>
<dbReference type="SMR" id="Q1WUQ7"/>
<dbReference type="STRING" id="362948.LSL_0469"/>
<dbReference type="KEGG" id="lsl:LSL_0469"/>
<dbReference type="PATRIC" id="fig|362948.14.peg.545"/>
<dbReference type="HOGENOM" id="CLU_023257_0_1_9"/>
<dbReference type="OrthoDB" id="9776731at2"/>
<dbReference type="UniPathway" id="UPA00034">
    <property type="reaction ID" value="UER00024"/>
</dbReference>
<dbReference type="Proteomes" id="UP000006559">
    <property type="component" value="Chromosome"/>
</dbReference>
<dbReference type="GO" id="GO:0050118">
    <property type="term" value="F:N-acetyldiaminopimelate deacetylase activity"/>
    <property type="evidence" value="ECO:0007669"/>
    <property type="project" value="UniProtKB-UniRule"/>
</dbReference>
<dbReference type="GO" id="GO:0019877">
    <property type="term" value="P:diaminopimelate biosynthetic process"/>
    <property type="evidence" value="ECO:0007669"/>
    <property type="project" value="UniProtKB-UniRule"/>
</dbReference>
<dbReference type="GO" id="GO:0009089">
    <property type="term" value="P:lysine biosynthetic process via diaminopimelate"/>
    <property type="evidence" value="ECO:0007669"/>
    <property type="project" value="UniProtKB-UniRule"/>
</dbReference>
<dbReference type="CDD" id="cd05670">
    <property type="entry name" value="M20_Acy1_YkuR-like"/>
    <property type="match status" value="1"/>
</dbReference>
<dbReference type="FunFam" id="3.30.70.360:FF:000001">
    <property type="entry name" value="N-acetyldiaminopimelate deacetylase"/>
    <property type="match status" value="1"/>
</dbReference>
<dbReference type="Gene3D" id="3.30.70.360">
    <property type="match status" value="1"/>
</dbReference>
<dbReference type="Gene3D" id="3.40.630.10">
    <property type="entry name" value="Zn peptidases"/>
    <property type="match status" value="1"/>
</dbReference>
<dbReference type="HAMAP" id="MF_01692">
    <property type="entry name" value="DapEL"/>
    <property type="match status" value="1"/>
</dbReference>
<dbReference type="InterPro" id="IPR023905">
    <property type="entry name" value="AcetylDAP_deacetylase"/>
</dbReference>
<dbReference type="InterPro" id="IPR017439">
    <property type="entry name" value="Amidohydrolase"/>
</dbReference>
<dbReference type="InterPro" id="IPR036264">
    <property type="entry name" value="Bact_exopeptidase_dim_dom"/>
</dbReference>
<dbReference type="InterPro" id="IPR002933">
    <property type="entry name" value="Peptidase_M20"/>
</dbReference>
<dbReference type="InterPro" id="IPR011650">
    <property type="entry name" value="Peptidase_M20_dimer"/>
</dbReference>
<dbReference type="NCBIfam" id="TIGR01891">
    <property type="entry name" value="amidohydrolases"/>
    <property type="match status" value="1"/>
</dbReference>
<dbReference type="PANTHER" id="PTHR11014:SF98">
    <property type="entry name" value="N-ACETYLDIAMINOPIMELATE DEACETYLASE"/>
    <property type="match status" value="1"/>
</dbReference>
<dbReference type="PANTHER" id="PTHR11014">
    <property type="entry name" value="PEPTIDASE M20 FAMILY MEMBER"/>
    <property type="match status" value="1"/>
</dbReference>
<dbReference type="Pfam" id="PF07687">
    <property type="entry name" value="M20_dimer"/>
    <property type="match status" value="1"/>
</dbReference>
<dbReference type="Pfam" id="PF01546">
    <property type="entry name" value="Peptidase_M20"/>
    <property type="match status" value="1"/>
</dbReference>
<dbReference type="PIRSF" id="PIRSF005962">
    <property type="entry name" value="Pept_M20D_amidohydro"/>
    <property type="match status" value="1"/>
</dbReference>
<dbReference type="SUPFAM" id="SSF55031">
    <property type="entry name" value="Bacterial exopeptidase dimerisation domain"/>
    <property type="match status" value="1"/>
</dbReference>
<dbReference type="SUPFAM" id="SSF53187">
    <property type="entry name" value="Zn-dependent exopeptidases"/>
    <property type="match status" value="1"/>
</dbReference>
<evidence type="ECO:0000255" key="1">
    <source>
        <dbReference type="HAMAP-Rule" id="MF_01692"/>
    </source>
</evidence>
<keyword id="KW-0028">Amino-acid biosynthesis</keyword>
<keyword id="KW-0220">Diaminopimelate biosynthesis</keyword>
<keyword id="KW-0378">Hydrolase</keyword>
<keyword id="KW-0457">Lysine biosynthesis</keyword>
<keyword id="KW-1185">Reference proteome</keyword>
<proteinExistence type="inferred from homology"/>